<accession>B4EY76</accession>
<gene>
    <name evidence="1" type="primary">purC</name>
    <name type="ordered locus">PMI1562</name>
</gene>
<proteinExistence type="inferred from homology"/>
<sequence length="237" mass="27157">MQKKAELYRGKAKTVYTTESSDYLILEFRNDTSALDGQRIEQFDRKGMVNNKFNYFIMNKLEEAGIPTQMERLLSDNEVLVKKLDMVPVECVIRNRAAGSLVKRLGIEEGTVLNPPIFDLFLKDDARHDPMVNESYCETFGWVSKENLAEMKRLSYKANDVLSELFDKAGLILVDFKLEFGLFNGKVVLGDEFSPDGSRLWDKNTLDKMDKDRFRQSLGGLIEAYEEVARRIGVSLD</sequence>
<evidence type="ECO:0000255" key="1">
    <source>
        <dbReference type="HAMAP-Rule" id="MF_00137"/>
    </source>
</evidence>
<feature type="chain" id="PRO_1000096004" description="Phosphoribosylaminoimidazole-succinocarboxamide synthase">
    <location>
        <begin position="1"/>
        <end position="237"/>
    </location>
</feature>
<comment type="catalytic activity">
    <reaction evidence="1">
        <text>5-amino-1-(5-phospho-D-ribosyl)imidazole-4-carboxylate + L-aspartate + ATP = (2S)-2-[5-amino-1-(5-phospho-beta-D-ribosyl)imidazole-4-carboxamido]succinate + ADP + phosphate + 2 H(+)</text>
        <dbReference type="Rhea" id="RHEA:22628"/>
        <dbReference type="ChEBI" id="CHEBI:15378"/>
        <dbReference type="ChEBI" id="CHEBI:29991"/>
        <dbReference type="ChEBI" id="CHEBI:30616"/>
        <dbReference type="ChEBI" id="CHEBI:43474"/>
        <dbReference type="ChEBI" id="CHEBI:58443"/>
        <dbReference type="ChEBI" id="CHEBI:77657"/>
        <dbReference type="ChEBI" id="CHEBI:456216"/>
        <dbReference type="EC" id="6.3.2.6"/>
    </reaction>
</comment>
<comment type="pathway">
    <text evidence="1">Purine metabolism; IMP biosynthesis via de novo pathway; 5-amino-1-(5-phospho-D-ribosyl)imidazole-4-carboxamide from 5-amino-1-(5-phospho-D-ribosyl)imidazole-4-carboxylate: step 1/2.</text>
</comment>
<comment type="similarity">
    <text evidence="1">Belongs to the SAICAR synthetase family.</text>
</comment>
<name>PUR7_PROMH</name>
<reference key="1">
    <citation type="journal article" date="2008" name="J. Bacteriol.">
        <title>Complete genome sequence of uropathogenic Proteus mirabilis, a master of both adherence and motility.</title>
        <authorList>
            <person name="Pearson M.M."/>
            <person name="Sebaihia M."/>
            <person name="Churcher C."/>
            <person name="Quail M.A."/>
            <person name="Seshasayee A.S."/>
            <person name="Luscombe N.M."/>
            <person name="Abdellah Z."/>
            <person name="Arrosmith C."/>
            <person name="Atkin B."/>
            <person name="Chillingworth T."/>
            <person name="Hauser H."/>
            <person name="Jagels K."/>
            <person name="Moule S."/>
            <person name="Mungall K."/>
            <person name="Norbertczak H."/>
            <person name="Rabbinowitsch E."/>
            <person name="Walker D."/>
            <person name="Whithead S."/>
            <person name="Thomson N.R."/>
            <person name="Rather P.N."/>
            <person name="Parkhill J."/>
            <person name="Mobley H.L.T."/>
        </authorList>
    </citation>
    <scope>NUCLEOTIDE SEQUENCE [LARGE SCALE GENOMIC DNA]</scope>
    <source>
        <strain>HI4320</strain>
    </source>
</reference>
<dbReference type="EC" id="6.3.2.6" evidence="1"/>
<dbReference type="EMBL" id="AM942759">
    <property type="protein sequence ID" value="CAR43276.1"/>
    <property type="molecule type" value="Genomic_DNA"/>
</dbReference>
<dbReference type="RefSeq" id="WP_004243413.1">
    <property type="nucleotide sequence ID" value="NC_010554.1"/>
</dbReference>
<dbReference type="SMR" id="B4EY76"/>
<dbReference type="EnsemblBacteria" id="CAR43276">
    <property type="protein sequence ID" value="CAR43276"/>
    <property type="gene ID" value="PMI1562"/>
</dbReference>
<dbReference type="GeneID" id="6802767"/>
<dbReference type="KEGG" id="pmr:PMI1562"/>
<dbReference type="eggNOG" id="COG0152">
    <property type="taxonomic scope" value="Bacteria"/>
</dbReference>
<dbReference type="HOGENOM" id="CLU_061495_2_0_6"/>
<dbReference type="UniPathway" id="UPA00074">
    <property type="reaction ID" value="UER00131"/>
</dbReference>
<dbReference type="Proteomes" id="UP000008319">
    <property type="component" value="Chromosome"/>
</dbReference>
<dbReference type="GO" id="GO:0005829">
    <property type="term" value="C:cytosol"/>
    <property type="evidence" value="ECO:0007669"/>
    <property type="project" value="TreeGrafter"/>
</dbReference>
<dbReference type="GO" id="GO:0005524">
    <property type="term" value="F:ATP binding"/>
    <property type="evidence" value="ECO:0007669"/>
    <property type="project" value="UniProtKB-KW"/>
</dbReference>
<dbReference type="GO" id="GO:0004639">
    <property type="term" value="F:phosphoribosylaminoimidazolesuccinocarboxamide synthase activity"/>
    <property type="evidence" value="ECO:0007669"/>
    <property type="project" value="UniProtKB-UniRule"/>
</dbReference>
<dbReference type="GO" id="GO:0006189">
    <property type="term" value="P:'de novo' IMP biosynthetic process"/>
    <property type="evidence" value="ECO:0007669"/>
    <property type="project" value="UniProtKB-UniRule"/>
</dbReference>
<dbReference type="GO" id="GO:0009236">
    <property type="term" value="P:cobalamin biosynthetic process"/>
    <property type="evidence" value="ECO:0007669"/>
    <property type="project" value="InterPro"/>
</dbReference>
<dbReference type="CDD" id="cd01415">
    <property type="entry name" value="SAICAR_synt_PurC"/>
    <property type="match status" value="1"/>
</dbReference>
<dbReference type="FunFam" id="3.30.200.20:FF:000086">
    <property type="entry name" value="Phosphoribosylaminoimidazole-succinocarboxamide synthase"/>
    <property type="match status" value="1"/>
</dbReference>
<dbReference type="FunFam" id="3.30.470.20:FF:000006">
    <property type="entry name" value="Phosphoribosylaminoimidazole-succinocarboxamide synthase"/>
    <property type="match status" value="1"/>
</dbReference>
<dbReference type="Gene3D" id="3.30.470.20">
    <property type="entry name" value="ATP-grasp fold, B domain"/>
    <property type="match status" value="1"/>
</dbReference>
<dbReference type="Gene3D" id="3.30.200.20">
    <property type="entry name" value="Phosphorylase Kinase, domain 1"/>
    <property type="match status" value="1"/>
</dbReference>
<dbReference type="HAMAP" id="MF_00137">
    <property type="entry name" value="SAICAR_synth"/>
    <property type="match status" value="1"/>
</dbReference>
<dbReference type="InterPro" id="IPR028923">
    <property type="entry name" value="SAICAR_synt/ADE2_N"/>
</dbReference>
<dbReference type="InterPro" id="IPR033934">
    <property type="entry name" value="SAICAR_synt_PurC"/>
</dbReference>
<dbReference type="InterPro" id="IPR001636">
    <property type="entry name" value="SAICAR_synth"/>
</dbReference>
<dbReference type="InterPro" id="IPR050089">
    <property type="entry name" value="SAICAR_synthetase"/>
</dbReference>
<dbReference type="InterPro" id="IPR018236">
    <property type="entry name" value="SAICAR_synthetase_CS"/>
</dbReference>
<dbReference type="NCBIfam" id="TIGR00081">
    <property type="entry name" value="purC"/>
    <property type="match status" value="1"/>
</dbReference>
<dbReference type="PANTHER" id="PTHR43599">
    <property type="entry name" value="MULTIFUNCTIONAL PROTEIN ADE2"/>
    <property type="match status" value="1"/>
</dbReference>
<dbReference type="PANTHER" id="PTHR43599:SF3">
    <property type="entry name" value="SI:DKEY-6E2.2"/>
    <property type="match status" value="1"/>
</dbReference>
<dbReference type="Pfam" id="PF01259">
    <property type="entry name" value="SAICAR_synt"/>
    <property type="match status" value="1"/>
</dbReference>
<dbReference type="SUPFAM" id="SSF56104">
    <property type="entry name" value="SAICAR synthase-like"/>
    <property type="match status" value="1"/>
</dbReference>
<dbReference type="PROSITE" id="PS01057">
    <property type="entry name" value="SAICAR_SYNTHETASE_1"/>
    <property type="match status" value="1"/>
</dbReference>
<dbReference type="PROSITE" id="PS01058">
    <property type="entry name" value="SAICAR_SYNTHETASE_2"/>
    <property type="match status" value="1"/>
</dbReference>
<protein>
    <recommendedName>
        <fullName evidence="1">Phosphoribosylaminoimidazole-succinocarboxamide synthase</fullName>
        <ecNumber evidence="1">6.3.2.6</ecNumber>
    </recommendedName>
    <alternativeName>
        <fullName evidence="1">SAICAR synthetase</fullName>
    </alternativeName>
</protein>
<organism>
    <name type="scientific">Proteus mirabilis (strain HI4320)</name>
    <dbReference type="NCBI Taxonomy" id="529507"/>
    <lineage>
        <taxon>Bacteria</taxon>
        <taxon>Pseudomonadati</taxon>
        <taxon>Pseudomonadota</taxon>
        <taxon>Gammaproteobacteria</taxon>
        <taxon>Enterobacterales</taxon>
        <taxon>Morganellaceae</taxon>
        <taxon>Proteus</taxon>
    </lineage>
</organism>
<keyword id="KW-0067">ATP-binding</keyword>
<keyword id="KW-0436">Ligase</keyword>
<keyword id="KW-0547">Nucleotide-binding</keyword>
<keyword id="KW-0658">Purine biosynthesis</keyword>
<keyword id="KW-1185">Reference proteome</keyword>